<evidence type="ECO:0000250" key="1"/>
<evidence type="ECO:0000256" key="2">
    <source>
        <dbReference type="SAM" id="MobiDB-lite"/>
    </source>
</evidence>
<evidence type="ECO:0000305" key="3"/>
<gene>
    <name type="primary">htb1</name>
    <name type="ORF">ACLA_033360</name>
</gene>
<protein>
    <recommendedName>
        <fullName>Histone H2B</fullName>
    </recommendedName>
</protein>
<name>H2B_ASPCL</name>
<dbReference type="EMBL" id="DS027056">
    <property type="protein sequence ID" value="EAW09133.1"/>
    <property type="molecule type" value="Genomic_DNA"/>
</dbReference>
<dbReference type="RefSeq" id="XP_001270559.1">
    <property type="nucleotide sequence ID" value="XM_001270558.1"/>
</dbReference>
<dbReference type="SMR" id="A1CJ09"/>
<dbReference type="STRING" id="344612.A1CJ09"/>
<dbReference type="EnsemblFungi" id="EAW09133">
    <property type="protein sequence ID" value="EAW09133"/>
    <property type="gene ID" value="ACLA_033360"/>
</dbReference>
<dbReference type="GeneID" id="4703176"/>
<dbReference type="KEGG" id="act:ACLA_033360"/>
<dbReference type="VEuPathDB" id="FungiDB:ACLA_033360"/>
<dbReference type="eggNOG" id="KOG1744">
    <property type="taxonomic scope" value="Eukaryota"/>
</dbReference>
<dbReference type="HOGENOM" id="CLU_075666_1_3_1"/>
<dbReference type="OMA" id="FCPFAIR"/>
<dbReference type="OrthoDB" id="10254238at2759"/>
<dbReference type="Proteomes" id="UP000006701">
    <property type="component" value="Unassembled WGS sequence"/>
</dbReference>
<dbReference type="GO" id="GO:0000786">
    <property type="term" value="C:nucleosome"/>
    <property type="evidence" value="ECO:0007669"/>
    <property type="project" value="UniProtKB-KW"/>
</dbReference>
<dbReference type="GO" id="GO:0005634">
    <property type="term" value="C:nucleus"/>
    <property type="evidence" value="ECO:0007669"/>
    <property type="project" value="UniProtKB-SubCell"/>
</dbReference>
<dbReference type="GO" id="GO:0003677">
    <property type="term" value="F:DNA binding"/>
    <property type="evidence" value="ECO:0007669"/>
    <property type="project" value="UniProtKB-KW"/>
</dbReference>
<dbReference type="GO" id="GO:0046982">
    <property type="term" value="F:protein heterodimerization activity"/>
    <property type="evidence" value="ECO:0007669"/>
    <property type="project" value="InterPro"/>
</dbReference>
<dbReference type="GO" id="GO:0030527">
    <property type="term" value="F:structural constituent of chromatin"/>
    <property type="evidence" value="ECO:0007669"/>
    <property type="project" value="InterPro"/>
</dbReference>
<dbReference type="CDD" id="cd22910">
    <property type="entry name" value="HFD_H2B"/>
    <property type="match status" value="1"/>
</dbReference>
<dbReference type="FunFam" id="1.10.20.10:FF:000014">
    <property type="entry name" value="Histone H2B"/>
    <property type="match status" value="1"/>
</dbReference>
<dbReference type="Gene3D" id="1.10.20.10">
    <property type="entry name" value="Histone, subunit A"/>
    <property type="match status" value="1"/>
</dbReference>
<dbReference type="InterPro" id="IPR009072">
    <property type="entry name" value="Histone-fold"/>
</dbReference>
<dbReference type="InterPro" id="IPR007125">
    <property type="entry name" value="Histone_H2A/H2B/H3"/>
</dbReference>
<dbReference type="InterPro" id="IPR000558">
    <property type="entry name" value="Histone_H2B"/>
</dbReference>
<dbReference type="InterPro" id="IPR055333">
    <property type="entry name" value="HISTONE_H2B_site"/>
</dbReference>
<dbReference type="PANTHER" id="PTHR23428">
    <property type="entry name" value="HISTONE H2B"/>
    <property type="match status" value="1"/>
</dbReference>
<dbReference type="Pfam" id="PF00125">
    <property type="entry name" value="Histone"/>
    <property type="match status" value="1"/>
</dbReference>
<dbReference type="PRINTS" id="PR00621">
    <property type="entry name" value="HISTONEH2B"/>
</dbReference>
<dbReference type="SMART" id="SM00427">
    <property type="entry name" value="H2B"/>
    <property type="match status" value="1"/>
</dbReference>
<dbReference type="SUPFAM" id="SSF47113">
    <property type="entry name" value="Histone-fold"/>
    <property type="match status" value="1"/>
</dbReference>
<dbReference type="PROSITE" id="PS00357">
    <property type="entry name" value="HISTONE_H2B"/>
    <property type="match status" value="1"/>
</dbReference>
<sequence>MPPKAAEKKPSTGGKAPAGKAPAEKKEAGKKTAAAASGDKKKRGKTRKETYSSYIYKVLKQVHPDTGISTRAMSILNSFVNDIFERVATEASKLAAYNKKSTISSREIQTSVRLILPGELAKHAVSEGTKAVTKYSSSAK</sequence>
<feature type="initiator methionine" description="Removed" evidence="1">
    <location>
        <position position="1"/>
    </location>
</feature>
<feature type="chain" id="PRO_0000297845" description="Histone H2B">
    <location>
        <begin position="2"/>
        <end position="140"/>
    </location>
</feature>
<feature type="region of interest" description="Disordered" evidence="2">
    <location>
        <begin position="1"/>
        <end position="48"/>
    </location>
</feature>
<feature type="compositionally biased region" description="Basic and acidic residues" evidence="2">
    <location>
        <begin position="1"/>
        <end position="10"/>
    </location>
</feature>
<feature type="compositionally biased region" description="Low complexity" evidence="2">
    <location>
        <begin position="11"/>
        <end position="21"/>
    </location>
</feature>
<feature type="modified residue" description="N6-acetyllysine; alternate" evidence="1">
    <location>
        <position position="8"/>
    </location>
</feature>
<feature type="modified residue" description="N6-acetyllysine; alternate" evidence="1">
    <location>
        <position position="9"/>
    </location>
</feature>
<feature type="modified residue" description="N6-acetyllysine" evidence="1">
    <location>
        <position position="15"/>
    </location>
</feature>
<feature type="modified residue" description="N6-acetyllysine; alternate" evidence="1">
    <location>
        <position position="25"/>
    </location>
</feature>
<feature type="cross-link" description="Glycyl lysine isopeptide (Lys-Gly) (interchain with G-Cter in SUMO); alternate" evidence="1">
    <location>
        <position position="8"/>
    </location>
</feature>
<feature type="cross-link" description="Glycyl lysine isopeptide (Lys-Gly) (interchain with G-Cter in SUMO); alternate" evidence="1">
    <location>
        <position position="9"/>
    </location>
</feature>
<feature type="cross-link" description="Glycyl lysine isopeptide (Lys-Gly) (interchain with G-Cter in SUMO); alternate" evidence="1">
    <location>
        <position position="25"/>
    </location>
</feature>
<feature type="cross-link" description="Glycyl lysine isopeptide (Lys-Gly) (interchain with G-Cter in SUMO)" evidence="1">
    <location>
        <position position="26"/>
    </location>
</feature>
<feature type="cross-link" description="Glycyl lysine isopeptide (Lys-Gly) (interchain with G-Cter in ubiquitin)" evidence="1">
    <location>
        <position position="134"/>
    </location>
</feature>
<reference key="1">
    <citation type="journal article" date="2008" name="PLoS Genet.">
        <title>Genomic islands in the pathogenic filamentous fungus Aspergillus fumigatus.</title>
        <authorList>
            <person name="Fedorova N.D."/>
            <person name="Khaldi N."/>
            <person name="Joardar V.S."/>
            <person name="Maiti R."/>
            <person name="Amedeo P."/>
            <person name="Anderson M.J."/>
            <person name="Crabtree J."/>
            <person name="Silva J.C."/>
            <person name="Badger J.H."/>
            <person name="Albarraq A."/>
            <person name="Angiuoli S."/>
            <person name="Bussey H."/>
            <person name="Bowyer P."/>
            <person name="Cotty P.J."/>
            <person name="Dyer P.S."/>
            <person name="Egan A."/>
            <person name="Galens K."/>
            <person name="Fraser-Liggett C.M."/>
            <person name="Haas B.J."/>
            <person name="Inman J.M."/>
            <person name="Kent R."/>
            <person name="Lemieux S."/>
            <person name="Malavazi I."/>
            <person name="Orvis J."/>
            <person name="Roemer T."/>
            <person name="Ronning C.M."/>
            <person name="Sundaram J.P."/>
            <person name="Sutton G."/>
            <person name="Turner G."/>
            <person name="Venter J.C."/>
            <person name="White O.R."/>
            <person name="Whitty B.R."/>
            <person name="Youngman P."/>
            <person name="Wolfe K.H."/>
            <person name="Goldman G.H."/>
            <person name="Wortman J.R."/>
            <person name="Jiang B."/>
            <person name="Denning D.W."/>
            <person name="Nierman W.C."/>
        </authorList>
    </citation>
    <scope>NUCLEOTIDE SEQUENCE [LARGE SCALE GENOMIC DNA]</scope>
    <source>
        <strain>ATCC 1007 / CBS 513.65 / DSM 816 / NCTC 3887 / NRRL 1 / QM 1276 / 107</strain>
    </source>
</reference>
<comment type="function">
    <text>Core component of nucleosome. Nucleosomes wrap and compact DNA into chromatin, limiting DNA accessibility to the cellular machineries which require DNA as a template. Histones thereby play a central role in transcription regulation, DNA repair, DNA replication and chromosomal stability. DNA accessibility is regulated via a complex set of post-translational modifications of histones, also called histone code, and nucleosome remodeling.</text>
</comment>
<comment type="subunit">
    <text>The nucleosome is a histone octamer containing two molecules each of H2A, H2B, H3 and H4 assembled in one H3-H4 heterotetramer and two H2A-H2B heterodimers. The octamer wraps approximately 147 bp of DNA.</text>
</comment>
<comment type="subcellular location">
    <subcellularLocation>
        <location evidence="1">Nucleus</location>
    </subcellularLocation>
    <subcellularLocation>
        <location evidence="1">Chromosome</location>
    </subcellularLocation>
</comment>
<comment type="PTM">
    <text evidence="1">Monoubiquitinated by the ubc2-bre1 complex to form H2BK123ub1. H2BK123ub1 gives a specific tag for epigenetic transcriptional activation and is also prerequisite for H3K4me and H3K79me formation. H2BK123ub1 also modulates the formation of double-strand breaks during meiosis and is a prerequisite for DNA-damage checkpoint activation (By similarity).</text>
</comment>
<comment type="PTM">
    <text evidence="1">Acetylated by gcn5 to form H2BK11ac and H2BK16ac. H2BK16ac can also be formed by esa1. Acetylation of N-terminal lysines and particularly formation of H2BK11acK16ac has a positive effect on transcription (By similarity).</text>
</comment>
<comment type="PTM">
    <text evidence="1">Sumoylation to form H2BK6su or H2BK7su, and probably also H2BK16su or H2BK17su, occurs preferentially near the telomeres and represses gene transcription.</text>
</comment>
<comment type="similarity">
    <text evidence="3">Belongs to the histone H2B family.</text>
</comment>
<comment type="caution">
    <text evidence="3">To ensure consistency between histone entries, we follow the 'Brno' nomenclature for histone modifications, with positions referring to those used in the literature for the 'closest' model organism. Due to slight variations in histone sequences between organisms and to the presence of initiator methionine in UniProtKB/Swiss-Prot sequences, the actual positions of modified amino acids in the sequence generally differ. In this entry the following conventions are used: H2BK6ac = acetylated Lys-8; H2BK6su = sumoylated Lys-8; H2BK7ac = acetylated Lys-8; H2BK7su = sumoylated Lys-9; H2BK11ac = acetylated Lys-15; H2BK16ac = acetylated Lys-25; H2BK16su = sumoylated Lys-25; H2BK17su = sumoylated Lys-26; H2BK123ub1 = monoubiquitinated Lys-134.</text>
</comment>
<accession>A1CJ09</accession>
<keyword id="KW-0007">Acetylation</keyword>
<keyword id="KW-0158">Chromosome</keyword>
<keyword id="KW-0238">DNA-binding</keyword>
<keyword id="KW-1017">Isopeptide bond</keyword>
<keyword id="KW-0544">Nucleosome core</keyword>
<keyword id="KW-0539">Nucleus</keyword>
<keyword id="KW-1185">Reference proteome</keyword>
<keyword id="KW-0832">Ubl conjugation</keyword>
<organism>
    <name type="scientific">Aspergillus clavatus (strain ATCC 1007 / CBS 513.65 / DSM 816 / NCTC 3887 / NRRL 1 / QM 1276 / 107)</name>
    <dbReference type="NCBI Taxonomy" id="344612"/>
    <lineage>
        <taxon>Eukaryota</taxon>
        <taxon>Fungi</taxon>
        <taxon>Dikarya</taxon>
        <taxon>Ascomycota</taxon>
        <taxon>Pezizomycotina</taxon>
        <taxon>Eurotiomycetes</taxon>
        <taxon>Eurotiomycetidae</taxon>
        <taxon>Eurotiales</taxon>
        <taxon>Aspergillaceae</taxon>
        <taxon>Aspergillus</taxon>
        <taxon>Aspergillus subgen. Fumigati</taxon>
    </lineage>
</organism>
<proteinExistence type="inferred from homology"/>